<name>CFM9_ARATH</name>
<sequence>MNQVFKGWSRGMSTSRGRSMRSKVESRMRKESGKTLREIRRAKKLKKKLMTDEERLIYNLKRAKKKVALLLQKLKKYDLPELPSPVHDPELFTSEQVQAFKKIGFKNKNYVPVGVRGVFGGVVQNMHMHWKFHETVQVCCDNFPKEKIKEMASMIARLSGGVVINIHNVKTIIMFRGRNYRQPKNLIPVNTLTKRKALFKARFEQALESQKLNIKKTEQQLRRMGVNPEDPVAMASIHRVASTFFNAIDKKEGTPYVFHGDKQSERGTSVDNREESEPGDEDSDQEELDRFIAEIEEAADKEWEEEEAAEQEESGRIRYWNREEFAGRSRTPELRSYGDASHGFRRNDRDTHSQRRPNDSDDDDDDGELDSEDDEIPKRFDRARSSNTNTRRPREDFKRRSPDPRPRPRAQVRSDDDVLSDLDNTMWDSEDEEDAPPANYISSSDDDEDENRTVSASSSKQSRFRNNSSRDGINNSKSKSGKQRDEDWDSD</sequence>
<reference key="1">
    <citation type="journal article" date="2000" name="DNA Res.">
        <title>Structural analysis of Arabidopsis thaliana chromosome 3. I. Sequence features of the regions of 4,504,864 bp covered by sixty P1 and TAC clones.</title>
        <authorList>
            <person name="Sato S."/>
            <person name="Nakamura Y."/>
            <person name="Kaneko T."/>
            <person name="Katoh T."/>
            <person name="Asamizu E."/>
            <person name="Tabata S."/>
        </authorList>
    </citation>
    <scope>NUCLEOTIDE SEQUENCE [LARGE SCALE GENOMIC DNA]</scope>
    <source>
        <strain>cv. Columbia</strain>
    </source>
</reference>
<reference key="2">
    <citation type="journal article" date="2017" name="Plant J.">
        <title>Araport11: a complete reannotation of the Arabidopsis thaliana reference genome.</title>
        <authorList>
            <person name="Cheng C.Y."/>
            <person name="Krishnakumar V."/>
            <person name="Chan A.P."/>
            <person name="Thibaud-Nissen F."/>
            <person name="Schobel S."/>
            <person name="Town C.D."/>
        </authorList>
    </citation>
    <scope>GENOME REANNOTATION</scope>
    <source>
        <strain>cv. Columbia</strain>
    </source>
</reference>
<reference key="3">
    <citation type="journal article" date="2019" name="Plant Cell Physiol.">
        <title>CFM9, a mitochondrial CRM protein, is crucial for mitochondrial intron splicing, mitochondria function, and Arabidopsis growth and stress responses.</title>
        <authorList>
            <person name="Lee K."/>
            <person name="Park S.J."/>
            <person name="Park Y.I."/>
            <person name="Kang H."/>
        </authorList>
    </citation>
    <scope>FUNCTION</scope>
    <scope>SUBCELLULAR LOCATION</scope>
    <scope>TISSUE SPECIFICITY</scope>
    <scope>DISRUPTION PHENOTYPE</scope>
</reference>
<accession>Q9LT57</accession>
<keyword id="KW-0496">Mitochondrion</keyword>
<keyword id="KW-0507">mRNA processing</keyword>
<keyword id="KW-0508">mRNA splicing</keyword>
<keyword id="KW-1185">Reference proteome</keyword>
<keyword id="KW-0687">Ribonucleoprotein</keyword>
<keyword id="KW-0694">RNA-binding</keyword>
<keyword id="KW-0809">Transit peptide</keyword>
<feature type="transit peptide" description="Mitochondrion" evidence="1">
    <location>
        <begin position="1"/>
        <end position="25"/>
    </location>
</feature>
<feature type="chain" id="PRO_0000448354" description="CRM-domain containing factor CFM9, mitochondrial">
    <location>
        <begin position="26"/>
        <end position="491"/>
    </location>
</feature>
<feature type="domain" description="CRM" evidence="2">
    <location>
        <begin position="90"/>
        <end position="187"/>
    </location>
</feature>
<feature type="region of interest" description="Disordered" evidence="3">
    <location>
        <begin position="1"/>
        <end position="34"/>
    </location>
</feature>
<feature type="region of interest" description="Disordered" evidence="3">
    <location>
        <begin position="255"/>
        <end position="287"/>
    </location>
</feature>
<feature type="region of interest" description="Disordered" evidence="3">
    <location>
        <begin position="328"/>
        <end position="491"/>
    </location>
</feature>
<feature type="compositionally biased region" description="Basic and acidic residues" evidence="3">
    <location>
        <begin position="22"/>
        <end position="34"/>
    </location>
</feature>
<feature type="compositionally biased region" description="Basic and acidic residues" evidence="3">
    <location>
        <begin position="255"/>
        <end position="265"/>
    </location>
</feature>
<feature type="compositionally biased region" description="Acidic residues" evidence="3">
    <location>
        <begin position="277"/>
        <end position="287"/>
    </location>
</feature>
<feature type="compositionally biased region" description="Basic and acidic residues" evidence="3">
    <location>
        <begin position="345"/>
        <end position="359"/>
    </location>
</feature>
<feature type="compositionally biased region" description="Acidic residues" evidence="3">
    <location>
        <begin position="360"/>
        <end position="375"/>
    </location>
</feature>
<feature type="compositionally biased region" description="Basic and acidic residues" evidence="3">
    <location>
        <begin position="392"/>
        <end position="416"/>
    </location>
</feature>
<feature type="compositionally biased region" description="Polar residues" evidence="3">
    <location>
        <begin position="453"/>
        <end position="478"/>
    </location>
</feature>
<dbReference type="EMBL" id="AB025626">
    <property type="protein sequence ID" value="BAB01285.1"/>
    <property type="molecule type" value="Genomic_DNA"/>
</dbReference>
<dbReference type="EMBL" id="CP002686">
    <property type="protein sequence ID" value="AEE77336.1"/>
    <property type="molecule type" value="Genomic_DNA"/>
</dbReference>
<dbReference type="EMBL" id="CP002686">
    <property type="protein sequence ID" value="ANM65985.1"/>
    <property type="molecule type" value="Genomic_DNA"/>
</dbReference>
<dbReference type="RefSeq" id="NP_001319656.1">
    <property type="nucleotide sequence ID" value="NM_001338891.1"/>
</dbReference>
<dbReference type="RefSeq" id="NP_189392.1">
    <property type="nucleotide sequence ID" value="NM_113671.3"/>
</dbReference>
<dbReference type="SMR" id="Q9LT57"/>
<dbReference type="FunCoup" id="Q9LT57">
    <property type="interactions" value="691"/>
</dbReference>
<dbReference type="STRING" id="3702.Q9LT57"/>
<dbReference type="iPTMnet" id="Q9LT57"/>
<dbReference type="PaxDb" id="3702-AT3G27550.1"/>
<dbReference type="ProteomicsDB" id="181725"/>
<dbReference type="EnsemblPlants" id="AT3G27550.1">
    <property type="protein sequence ID" value="AT3G27550.1"/>
    <property type="gene ID" value="AT3G27550"/>
</dbReference>
<dbReference type="EnsemblPlants" id="AT3G27550.3">
    <property type="protein sequence ID" value="AT3G27550.3"/>
    <property type="gene ID" value="AT3G27550"/>
</dbReference>
<dbReference type="GeneID" id="822377"/>
<dbReference type="Gramene" id="AT3G27550.1">
    <property type="protein sequence ID" value="AT3G27550.1"/>
    <property type="gene ID" value="AT3G27550"/>
</dbReference>
<dbReference type="Gramene" id="AT3G27550.3">
    <property type="protein sequence ID" value="AT3G27550.3"/>
    <property type="gene ID" value="AT3G27550"/>
</dbReference>
<dbReference type="KEGG" id="ath:AT3G27550"/>
<dbReference type="Araport" id="AT3G27550"/>
<dbReference type="TAIR" id="AT3G27550">
    <property type="gene designation" value="CFM9"/>
</dbReference>
<dbReference type="eggNOG" id="KOG1990">
    <property type="taxonomic scope" value="Eukaryota"/>
</dbReference>
<dbReference type="HOGENOM" id="CLU_032610_0_0_1"/>
<dbReference type="InParanoid" id="Q9LT57"/>
<dbReference type="OMA" id="QKRCFQT"/>
<dbReference type="PhylomeDB" id="Q9LT57"/>
<dbReference type="PRO" id="PR:Q9LT57"/>
<dbReference type="Proteomes" id="UP000006548">
    <property type="component" value="Chromosome 3"/>
</dbReference>
<dbReference type="ExpressionAtlas" id="Q9LT57">
    <property type="expression patterns" value="baseline and differential"/>
</dbReference>
<dbReference type="GO" id="GO:0005739">
    <property type="term" value="C:mitochondrion"/>
    <property type="evidence" value="ECO:0000314"/>
    <property type="project" value="UniProtKB"/>
</dbReference>
<dbReference type="GO" id="GO:1990904">
    <property type="term" value="C:ribonucleoprotein complex"/>
    <property type="evidence" value="ECO:0007669"/>
    <property type="project" value="UniProtKB-KW"/>
</dbReference>
<dbReference type="GO" id="GO:0003723">
    <property type="term" value="F:RNA binding"/>
    <property type="evidence" value="ECO:0007669"/>
    <property type="project" value="UniProtKB-KW"/>
</dbReference>
<dbReference type="GO" id="GO:0000373">
    <property type="term" value="P:Group II intron splicing"/>
    <property type="evidence" value="ECO:0000315"/>
    <property type="project" value="UniProtKB"/>
</dbReference>
<dbReference type="GO" id="GO:0140040">
    <property type="term" value="P:mitochondrial polycistronic RNA processing"/>
    <property type="evidence" value="ECO:0000315"/>
    <property type="project" value="UniProtKB"/>
</dbReference>
<dbReference type="GO" id="GO:0006397">
    <property type="term" value="P:mRNA processing"/>
    <property type="evidence" value="ECO:0007669"/>
    <property type="project" value="UniProtKB-KW"/>
</dbReference>
<dbReference type="GO" id="GO:0009737">
    <property type="term" value="P:response to abscisic acid"/>
    <property type="evidence" value="ECO:0000315"/>
    <property type="project" value="UniProtKB"/>
</dbReference>
<dbReference type="GO" id="GO:0009651">
    <property type="term" value="P:response to salt stress"/>
    <property type="evidence" value="ECO:0000315"/>
    <property type="project" value="UniProtKB"/>
</dbReference>
<dbReference type="GO" id="GO:0009414">
    <property type="term" value="P:response to water deprivation"/>
    <property type="evidence" value="ECO:0000315"/>
    <property type="project" value="UniProtKB"/>
</dbReference>
<dbReference type="Gene3D" id="3.30.110.60">
    <property type="entry name" value="YhbY-like"/>
    <property type="match status" value="1"/>
</dbReference>
<dbReference type="InterPro" id="IPR040286">
    <property type="entry name" value="At3g25440-like"/>
</dbReference>
<dbReference type="InterPro" id="IPR001890">
    <property type="entry name" value="RNA-binding_CRM"/>
</dbReference>
<dbReference type="InterPro" id="IPR035920">
    <property type="entry name" value="YhbY-like_sf"/>
</dbReference>
<dbReference type="PANTHER" id="PTHR31426:SF4">
    <property type="entry name" value="CRM-DOMAIN CONTAINING FACTOR CFM9, MITOCHONDRIAL"/>
    <property type="match status" value="1"/>
</dbReference>
<dbReference type="PANTHER" id="PTHR31426">
    <property type="entry name" value="GROUP II INTRON SPLICING FACTOR CRS1-LIKE"/>
    <property type="match status" value="1"/>
</dbReference>
<dbReference type="Pfam" id="PF01985">
    <property type="entry name" value="CRS1_YhbY"/>
    <property type="match status" value="1"/>
</dbReference>
<dbReference type="SMART" id="SM01103">
    <property type="entry name" value="CRS1_YhbY"/>
    <property type="match status" value="1"/>
</dbReference>
<dbReference type="SUPFAM" id="SSF75471">
    <property type="entry name" value="YhbY-like"/>
    <property type="match status" value="1"/>
</dbReference>
<dbReference type="PROSITE" id="PS51295">
    <property type="entry name" value="CRM"/>
    <property type="match status" value="1"/>
</dbReference>
<proteinExistence type="evidence at transcript level"/>
<comment type="function">
    <text evidence="4">Involved in the splicing of group II introns in mitochondria (PubMed:31359042). Required for the splicing of mitochondrial introns found in nad1, nad2, nad4, nad5, nad7, rps3 and cox2 genes (PubMed:31359042). Splicing of mitochondrial introns is crucial for mitochondrial biogenesis and function, plant growth and development, and plant response to abiotic stresses (PubMed:31359042).</text>
</comment>
<comment type="subcellular location">
    <subcellularLocation>
        <location evidence="4">Mitochondrion</location>
    </subcellularLocation>
</comment>
<comment type="tissue specificity">
    <text evidence="4">Highly expressed in roots and meristemic regions of young seedlings (PubMed:31359042). Expressed at low levels in stems, trichomes and stigma (PubMed:31359042).</text>
</comment>
<comment type="disruption phenotype">
    <text evidence="4">Delayed seed germination, retarded growth and reduced size and height.</text>
</comment>
<evidence type="ECO:0000255" key="1"/>
<evidence type="ECO:0000255" key="2">
    <source>
        <dbReference type="PROSITE-ProRule" id="PRU00626"/>
    </source>
</evidence>
<evidence type="ECO:0000256" key="3">
    <source>
        <dbReference type="SAM" id="MobiDB-lite"/>
    </source>
</evidence>
<evidence type="ECO:0000269" key="4">
    <source>
    </source>
</evidence>
<evidence type="ECO:0000303" key="5">
    <source>
    </source>
</evidence>
<evidence type="ECO:0000305" key="6"/>
<evidence type="ECO:0000312" key="7">
    <source>
        <dbReference type="Araport" id="AT3G27550"/>
    </source>
</evidence>
<evidence type="ECO:0000312" key="8">
    <source>
        <dbReference type="EMBL" id="BAB01285.1"/>
    </source>
</evidence>
<protein>
    <recommendedName>
        <fullName evidence="6">CRM-domain containing factor CFM9, mitochondrial</fullName>
    </recommendedName>
    <alternativeName>
        <fullName evidence="5">Protein CRM FAMILY MEMBER 9</fullName>
    </alternativeName>
</protein>
<organism>
    <name type="scientific">Arabidopsis thaliana</name>
    <name type="common">Mouse-ear cress</name>
    <dbReference type="NCBI Taxonomy" id="3702"/>
    <lineage>
        <taxon>Eukaryota</taxon>
        <taxon>Viridiplantae</taxon>
        <taxon>Streptophyta</taxon>
        <taxon>Embryophyta</taxon>
        <taxon>Tracheophyta</taxon>
        <taxon>Spermatophyta</taxon>
        <taxon>Magnoliopsida</taxon>
        <taxon>eudicotyledons</taxon>
        <taxon>Gunneridae</taxon>
        <taxon>Pentapetalae</taxon>
        <taxon>rosids</taxon>
        <taxon>malvids</taxon>
        <taxon>Brassicales</taxon>
        <taxon>Brassicaceae</taxon>
        <taxon>Camelineae</taxon>
        <taxon>Arabidopsis</taxon>
    </lineage>
</organism>
<gene>
    <name evidence="5" type="primary">CFM9</name>
    <name evidence="7" type="ordered locus">At3g27550</name>
    <name evidence="8" type="ORF">MMJ24.10</name>
</gene>